<evidence type="ECO:0000255" key="1">
    <source>
        <dbReference type="HAMAP-Rule" id="MF_00278"/>
    </source>
</evidence>
<dbReference type="EC" id="4.3.2.10" evidence="1"/>
<dbReference type="EC" id="3.5.1.2" evidence="1"/>
<dbReference type="EMBL" id="AP006627">
    <property type="protein sequence ID" value="BAD65580.1"/>
    <property type="molecule type" value="Genomic_DNA"/>
</dbReference>
<dbReference type="RefSeq" id="WP_011247888.1">
    <property type="nucleotide sequence ID" value="NC_006582.1"/>
</dbReference>
<dbReference type="SMR" id="Q5WDI0"/>
<dbReference type="STRING" id="66692.ABC3046"/>
<dbReference type="KEGG" id="bcl:ABC3046"/>
<dbReference type="eggNOG" id="COG0118">
    <property type="taxonomic scope" value="Bacteria"/>
</dbReference>
<dbReference type="HOGENOM" id="CLU_071837_2_2_9"/>
<dbReference type="OrthoDB" id="9807137at2"/>
<dbReference type="UniPathway" id="UPA00031">
    <property type="reaction ID" value="UER00010"/>
</dbReference>
<dbReference type="Proteomes" id="UP000001168">
    <property type="component" value="Chromosome"/>
</dbReference>
<dbReference type="GO" id="GO:0005737">
    <property type="term" value="C:cytoplasm"/>
    <property type="evidence" value="ECO:0007669"/>
    <property type="project" value="UniProtKB-SubCell"/>
</dbReference>
<dbReference type="GO" id="GO:0004359">
    <property type="term" value="F:glutaminase activity"/>
    <property type="evidence" value="ECO:0007669"/>
    <property type="project" value="UniProtKB-EC"/>
</dbReference>
<dbReference type="GO" id="GO:0000107">
    <property type="term" value="F:imidazoleglycerol-phosphate synthase activity"/>
    <property type="evidence" value="ECO:0007669"/>
    <property type="project" value="UniProtKB-UniRule"/>
</dbReference>
<dbReference type="GO" id="GO:0016829">
    <property type="term" value="F:lyase activity"/>
    <property type="evidence" value="ECO:0007669"/>
    <property type="project" value="UniProtKB-KW"/>
</dbReference>
<dbReference type="GO" id="GO:0000105">
    <property type="term" value="P:L-histidine biosynthetic process"/>
    <property type="evidence" value="ECO:0007669"/>
    <property type="project" value="UniProtKB-UniRule"/>
</dbReference>
<dbReference type="CDD" id="cd01748">
    <property type="entry name" value="GATase1_IGP_Synthase"/>
    <property type="match status" value="1"/>
</dbReference>
<dbReference type="Gene3D" id="3.40.50.880">
    <property type="match status" value="1"/>
</dbReference>
<dbReference type="HAMAP" id="MF_00278">
    <property type="entry name" value="HisH"/>
    <property type="match status" value="1"/>
</dbReference>
<dbReference type="InterPro" id="IPR029062">
    <property type="entry name" value="Class_I_gatase-like"/>
</dbReference>
<dbReference type="InterPro" id="IPR017926">
    <property type="entry name" value="GATASE"/>
</dbReference>
<dbReference type="InterPro" id="IPR010139">
    <property type="entry name" value="Imidazole-glycPsynth_HisH"/>
</dbReference>
<dbReference type="NCBIfam" id="TIGR01855">
    <property type="entry name" value="IMP_synth_hisH"/>
    <property type="match status" value="1"/>
</dbReference>
<dbReference type="PANTHER" id="PTHR42701">
    <property type="entry name" value="IMIDAZOLE GLYCEROL PHOSPHATE SYNTHASE SUBUNIT HISH"/>
    <property type="match status" value="1"/>
</dbReference>
<dbReference type="PANTHER" id="PTHR42701:SF1">
    <property type="entry name" value="IMIDAZOLE GLYCEROL PHOSPHATE SYNTHASE SUBUNIT HISH"/>
    <property type="match status" value="1"/>
</dbReference>
<dbReference type="Pfam" id="PF00117">
    <property type="entry name" value="GATase"/>
    <property type="match status" value="1"/>
</dbReference>
<dbReference type="PIRSF" id="PIRSF000495">
    <property type="entry name" value="Amidotransf_hisH"/>
    <property type="match status" value="1"/>
</dbReference>
<dbReference type="SUPFAM" id="SSF52317">
    <property type="entry name" value="Class I glutamine amidotransferase-like"/>
    <property type="match status" value="1"/>
</dbReference>
<dbReference type="PROSITE" id="PS51273">
    <property type="entry name" value="GATASE_TYPE_1"/>
    <property type="match status" value="1"/>
</dbReference>
<comment type="function">
    <text evidence="1">IGPS catalyzes the conversion of PRFAR and glutamine to IGP, AICAR and glutamate. The HisH subunit catalyzes the hydrolysis of glutamine to glutamate and ammonia as part of the synthesis of IGP and AICAR. The resulting ammonia molecule is channeled to the active site of HisF.</text>
</comment>
<comment type="catalytic activity">
    <reaction evidence="1">
        <text>5-[(5-phospho-1-deoxy-D-ribulos-1-ylimino)methylamino]-1-(5-phospho-beta-D-ribosyl)imidazole-4-carboxamide + L-glutamine = D-erythro-1-(imidazol-4-yl)glycerol 3-phosphate + 5-amino-1-(5-phospho-beta-D-ribosyl)imidazole-4-carboxamide + L-glutamate + H(+)</text>
        <dbReference type="Rhea" id="RHEA:24793"/>
        <dbReference type="ChEBI" id="CHEBI:15378"/>
        <dbReference type="ChEBI" id="CHEBI:29985"/>
        <dbReference type="ChEBI" id="CHEBI:58278"/>
        <dbReference type="ChEBI" id="CHEBI:58359"/>
        <dbReference type="ChEBI" id="CHEBI:58475"/>
        <dbReference type="ChEBI" id="CHEBI:58525"/>
        <dbReference type="EC" id="4.3.2.10"/>
    </reaction>
</comment>
<comment type="catalytic activity">
    <reaction evidence="1">
        <text>L-glutamine + H2O = L-glutamate + NH4(+)</text>
        <dbReference type="Rhea" id="RHEA:15889"/>
        <dbReference type="ChEBI" id="CHEBI:15377"/>
        <dbReference type="ChEBI" id="CHEBI:28938"/>
        <dbReference type="ChEBI" id="CHEBI:29985"/>
        <dbReference type="ChEBI" id="CHEBI:58359"/>
        <dbReference type="EC" id="3.5.1.2"/>
    </reaction>
</comment>
<comment type="pathway">
    <text evidence="1">Amino-acid biosynthesis; L-histidine biosynthesis; L-histidine from 5-phospho-alpha-D-ribose 1-diphosphate: step 5/9.</text>
</comment>
<comment type="subunit">
    <text evidence="1">Heterodimer of HisH and HisF.</text>
</comment>
<comment type="subcellular location">
    <subcellularLocation>
        <location evidence="1">Cytoplasm</location>
    </subcellularLocation>
</comment>
<gene>
    <name evidence="1" type="primary">hisH</name>
    <name type="ordered locus">ABC3046</name>
</gene>
<proteinExistence type="inferred from homology"/>
<protein>
    <recommendedName>
        <fullName evidence="1">Imidazole glycerol phosphate synthase subunit HisH</fullName>
        <ecNumber evidence="1">4.3.2.10</ecNumber>
    </recommendedName>
    <alternativeName>
        <fullName evidence="1">IGP synthase glutaminase subunit</fullName>
        <ecNumber evidence="1">3.5.1.2</ecNumber>
    </alternativeName>
    <alternativeName>
        <fullName evidence="1">IGP synthase subunit HisH</fullName>
    </alternativeName>
    <alternativeName>
        <fullName evidence="1">ImGP synthase subunit HisH</fullName>
        <shortName evidence="1">IGPS subunit HisH</shortName>
    </alternativeName>
</protein>
<organism>
    <name type="scientific">Shouchella clausii (strain KSM-K16)</name>
    <name type="common">Alkalihalobacillus clausii</name>
    <dbReference type="NCBI Taxonomy" id="66692"/>
    <lineage>
        <taxon>Bacteria</taxon>
        <taxon>Bacillati</taxon>
        <taxon>Bacillota</taxon>
        <taxon>Bacilli</taxon>
        <taxon>Bacillales</taxon>
        <taxon>Bacillaceae</taxon>
        <taxon>Shouchella</taxon>
    </lineage>
</organism>
<accession>Q5WDI0</accession>
<keyword id="KW-0028">Amino-acid biosynthesis</keyword>
<keyword id="KW-0963">Cytoplasm</keyword>
<keyword id="KW-0315">Glutamine amidotransferase</keyword>
<keyword id="KW-0368">Histidine biosynthesis</keyword>
<keyword id="KW-0378">Hydrolase</keyword>
<keyword id="KW-0456">Lyase</keyword>
<keyword id="KW-1185">Reference proteome</keyword>
<name>HIS5_SHOC1</name>
<reference key="1">
    <citation type="submission" date="2003-10" db="EMBL/GenBank/DDBJ databases">
        <title>The complete genome sequence of the alkaliphilic Bacillus clausii KSM-K16.</title>
        <authorList>
            <person name="Takaki Y."/>
            <person name="Kageyama Y."/>
            <person name="Shimamura S."/>
            <person name="Suzuki H."/>
            <person name="Nishi S."/>
            <person name="Hatada Y."/>
            <person name="Kawai S."/>
            <person name="Ito S."/>
            <person name="Horikoshi K."/>
        </authorList>
    </citation>
    <scope>NUCLEOTIDE SEQUENCE [LARGE SCALE GENOMIC DNA]</scope>
    <source>
        <strain>KSM-K16</strain>
    </source>
</reference>
<feature type="chain" id="PRO_0000152343" description="Imidazole glycerol phosphate synthase subunit HisH">
    <location>
        <begin position="1"/>
        <end position="207"/>
    </location>
</feature>
<feature type="domain" description="Glutamine amidotransferase type-1" evidence="1">
    <location>
        <begin position="1"/>
        <end position="207"/>
    </location>
</feature>
<feature type="active site" description="Nucleophile" evidence="1">
    <location>
        <position position="79"/>
    </location>
</feature>
<feature type="active site" evidence="1">
    <location>
        <position position="185"/>
    </location>
</feature>
<feature type="active site" evidence="1">
    <location>
        <position position="187"/>
    </location>
</feature>
<sequence length="207" mass="22747">MIGIIDYGMGNLHSVSKALERLAIPYFISSDGEELAKAKALILPGVGAFPDAMNILTQTNVQPFLDNWVAENKPLLGICLGMQLLFESSNEHQPTAGLGYLPGRVERFSGTTAEGHAYKVPHMGWNKLEFHRPTPLTEGVPDGYVYFVHSYVVRTETDIVVASSDYYQSVPAIVQKGQVYGMQFHPEKSSTVGMALLKRFGQLVEGN</sequence>